<dbReference type="EC" id="7.1.2.2" evidence="1"/>
<dbReference type="EMBL" id="AE008692">
    <property type="protein sequence ID" value="AAV88863.1"/>
    <property type="molecule type" value="Genomic_DNA"/>
</dbReference>
<dbReference type="RefSeq" id="WP_011240184.1">
    <property type="nucleotide sequence ID" value="NZ_CP035711.1"/>
</dbReference>
<dbReference type="SMR" id="Q5NQZ1"/>
<dbReference type="STRING" id="264203.ZMO0239"/>
<dbReference type="GeneID" id="79904531"/>
<dbReference type="KEGG" id="zmo:ZMO0239"/>
<dbReference type="eggNOG" id="COG0056">
    <property type="taxonomic scope" value="Bacteria"/>
</dbReference>
<dbReference type="HOGENOM" id="CLU_010091_2_1_5"/>
<dbReference type="Proteomes" id="UP000001173">
    <property type="component" value="Chromosome"/>
</dbReference>
<dbReference type="GO" id="GO:0005886">
    <property type="term" value="C:plasma membrane"/>
    <property type="evidence" value="ECO:0007669"/>
    <property type="project" value="UniProtKB-SubCell"/>
</dbReference>
<dbReference type="GO" id="GO:0045259">
    <property type="term" value="C:proton-transporting ATP synthase complex"/>
    <property type="evidence" value="ECO:0007669"/>
    <property type="project" value="UniProtKB-KW"/>
</dbReference>
<dbReference type="GO" id="GO:0043531">
    <property type="term" value="F:ADP binding"/>
    <property type="evidence" value="ECO:0007669"/>
    <property type="project" value="TreeGrafter"/>
</dbReference>
<dbReference type="GO" id="GO:0005524">
    <property type="term" value="F:ATP binding"/>
    <property type="evidence" value="ECO:0007669"/>
    <property type="project" value="UniProtKB-UniRule"/>
</dbReference>
<dbReference type="GO" id="GO:0046933">
    <property type="term" value="F:proton-transporting ATP synthase activity, rotational mechanism"/>
    <property type="evidence" value="ECO:0007669"/>
    <property type="project" value="UniProtKB-UniRule"/>
</dbReference>
<dbReference type="CDD" id="cd18113">
    <property type="entry name" value="ATP-synt_F1_alpha_C"/>
    <property type="match status" value="1"/>
</dbReference>
<dbReference type="CDD" id="cd18116">
    <property type="entry name" value="ATP-synt_F1_alpha_N"/>
    <property type="match status" value="1"/>
</dbReference>
<dbReference type="CDD" id="cd01132">
    <property type="entry name" value="F1-ATPase_alpha_CD"/>
    <property type="match status" value="1"/>
</dbReference>
<dbReference type="FunFam" id="1.20.150.20:FF:000001">
    <property type="entry name" value="ATP synthase subunit alpha"/>
    <property type="match status" value="1"/>
</dbReference>
<dbReference type="FunFam" id="2.40.30.20:FF:000001">
    <property type="entry name" value="ATP synthase subunit alpha"/>
    <property type="match status" value="1"/>
</dbReference>
<dbReference type="FunFam" id="3.40.50.300:FF:002432">
    <property type="entry name" value="ATP synthase subunit alpha, mitochondrial"/>
    <property type="match status" value="1"/>
</dbReference>
<dbReference type="Gene3D" id="2.40.30.20">
    <property type="match status" value="1"/>
</dbReference>
<dbReference type="Gene3D" id="1.20.150.20">
    <property type="entry name" value="ATP synthase alpha/beta chain, C-terminal domain"/>
    <property type="match status" value="1"/>
</dbReference>
<dbReference type="Gene3D" id="3.40.50.300">
    <property type="entry name" value="P-loop containing nucleotide triphosphate hydrolases"/>
    <property type="match status" value="1"/>
</dbReference>
<dbReference type="HAMAP" id="MF_01346">
    <property type="entry name" value="ATP_synth_alpha_bact"/>
    <property type="match status" value="1"/>
</dbReference>
<dbReference type="InterPro" id="IPR023366">
    <property type="entry name" value="ATP_synth_asu-like_sf"/>
</dbReference>
<dbReference type="InterPro" id="IPR000793">
    <property type="entry name" value="ATP_synth_asu_C"/>
</dbReference>
<dbReference type="InterPro" id="IPR038376">
    <property type="entry name" value="ATP_synth_asu_C_sf"/>
</dbReference>
<dbReference type="InterPro" id="IPR033732">
    <property type="entry name" value="ATP_synth_F1_a_nt-bd_dom"/>
</dbReference>
<dbReference type="InterPro" id="IPR005294">
    <property type="entry name" value="ATP_synth_F1_asu"/>
</dbReference>
<dbReference type="InterPro" id="IPR020003">
    <property type="entry name" value="ATPase_a/bsu_AS"/>
</dbReference>
<dbReference type="InterPro" id="IPR004100">
    <property type="entry name" value="ATPase_F1/V1/A1_a/bsu_N"/>
</dbReference>
<dbReference type="InterPro" id="IPR036121">
    <property type="entry name" value="ATPase_F1/V1/A1_a/bsu_N_sf"/>
</dbReference>
<dbReference type="InterPro" id="IPR000194">
    <property type="entry name" value="ATPase_F1/V1/A1_a/bsu_nucl-bd"/>
</dbReference>
<dbReference type="InterPro" id="IPR027417">
    <property type="entry name" value="P-loop_NTPase"/>
</dbReference>
<dbReference type="NCBIfam" id="TIGR00962">
    <property type="entry name" value="atpA"/>
    <property type="match status" value="1"/>
</dbReference>
<dbReference type="NCBIfam" id="NF009884">
    <property type="entry name" value="PRK13343.1"/>
    <property type="match status" value="1"/>
</dbReference>
<dbReference type="PANTHER" id="PTHR48082">
    <property type="entry name" value="ATP SYNTHASE SUBUNIT ALPHA, MITOCHONDRIAL"/>
    <property type="match status" value="1"/>
</dbReference>
<dbReference type="PANTHER" id="PTHR48082:SF2">
    <property type="entry name" value="ATP SYNTHASE SUBUNIT ALPHA, MITOCHONDRIAL"/>
    <property type="match status" value="1"/>
</dbReference>
<dbReference type="Pfam" id="PF00006">
    <property type="entry name" value="ATP-synt_ab"/>
    <property type="match status" value="1"/>
</dbReference>
<dbReference type="Pfam" id="PF00306">
    <property type="entry name" value="ATP-synt_ab_C"/>
    <property type="match status" value="1"/>
</dbReference>
<dbReference type="Pfam" id="PF02874">
    <property type="entry name" value="ATP-synt_ab_N"/>
    <property type="match status" value="1"/>
</dbReference>
<dbReference type="PIRSF" id="PIRSF039088">
    <property type="entry name" value="F_ATPase_subunit_alpha"/>
    <property type="match status" value="1"/>
</dbReference>
<dbReference type="SUPFAM" id="SSF47917">
    <property type="entry name" value="C-terminal domain of alpha and beta subunits of F1 ATP synthase"/>
    <property type="match status" value="1"/>
</dbReference>
<dbReference type="SUPFAM" id="SSF50615">
    <property type="entry name" value="N-terminal domain of alpha and beta subunits of F1 ATP synthase"/>
    <property type="match status" value="1"/>
</dbReference>
<dbReference type="SUPFAM" id="SSF52540">
    <property type="entry name" value="P-loop containing nucleoside triphosphate hydrolases"/>
    <property type="match status" value="1"/>
</dbReference>
<dbReference type="PROSITE" id="PS00152">
    <property type="entry name" value="ATPASE_ALPHA_BETA"/>
    <property type="match status" value="1"/>
</dbReference>
<name>ATPA_ZYMMO</name>
<evidence type="ECO:0000255" key="1">
    <source>
        <dbReference type="HAMAP-Rule" id="MF_01346"/>
    </source>
</evidence>
<accession>Q5NQZ1</accession>
<gene>
    <name evidence="1" type="primary">atpA</name>
    <name type="ordered locus">ZMO0239</name>
</gene>
<protein>
    <recommendedName>
        <fullName evidence="1">ATP synthase subunit alpha</fullName>
        <ecNumber evidence="1">7.1.2.2</ecNumber>
    </recommendedName>
    <alternativeName>
        <fullName evidence="1">ATP synthase F1 sector subunit alpha</fullName>
    </alternativeName>
    <alternativeName>
        <fullName evidence="1">F-ATPase subunit alpha</fullName>
    </alternativeName>
</protein>
<reference key="1">
    <citation type="journal article" date="2005" name="Nat. Biotechnol.">
        <title>The genome sequence of the ethanologenic bacterium Zymomonas mobilis ZM4.</title>
        <authorList>
            <person name="Seo J.-S."/>
            <person name="Chong H."/>
            <person name="Park H.S."/>
            <person name="Yoon K.-O."/>
            <person name="Jung C."/>
            <person name="Kim J.J."/>
            <person name="Hong J.H."/>
            <person name="Kim H."/>
            <person name="Kim J.-H."/>
            <person name="Kil J.-I."/>
            <person name="Park C.J."/>
            <person name="Oh H.-M."/>
            <person name="Lee J.-S."/>
            <person name="Jin S.-J."/>
            <person name="Um H.-W."/>
            <person name="Lee H.-J."/>
            <person name="Oh S.-J."/>
            <person name="Kim J.Y."/>
            <person name="Kang H.L."/>
            <person name="Lee S.Y."/>
            <person name="Lee K.J."/>
            <person name="Kang H.S."/>
        </authorList>
    </citation>
    <scope>NUCLEOTIDE SEQUENCE [LARGE SCALE GENOMIC DNA]</scope>
    <source>
        <strain>ATCC 31821 / ZM4 / CP4</strain>
    </source>
</reference>
<organism>
    <name type="scientific">Zymomonas mobilis subsp. mobilis (strain ATCC 31821 / ZM4 / CP4)</name>
    <dbReference type="NCBI Taxonomy" id="264203"/>
    <lineage>
        <taxon>Bacteria</taxon>
        <taxon>Pseudomonadati</taxon>
        <taxon>Pseudomonadota</taxon>
        <taxon>Alphaproteobacteria</taxon>
        <taxon>Sphingomonadales</taxon>
        <taxon>Zymomonadaceae</taxon>
        <taxon>Zymomonas</taxon>
    </lineage>
</organism>
<keyword id="KW-0066">ATP synthesis</keyword>
<keyword id="KW-0067">ATP-binding</keyword>
<keyword id="KW-0997">Cell inner membrane</keyword>
<keyword id="KW-1003">Cell membrane</keyword>
<keyword id="KW-0139">CF(1)</keyword>
<keyword id="KW-0375">Hydrogen ion transport</keyword>
<keyword id="KW-0406">Ion transport</keyword>
<keyword id="KW-0472">Membrane</keyword>
<keyword id="KW-0547">Nucleotide-binding</keyword>
<keyword id="KW-1185">Reference proteome</keyword>
<keyword id="KW-1278">Translocase</keyword>
<keyword id="KW-0813">Transport</keyword>
<sequence>MEIRAAEISKVIREQIEGFGADAEVSEVGRVISVGDGIARVYGLDKVEAGEMVTFSSGVQGMALNLEADNVGVVIFGSDLEVGEGDTVRRTGQIVDVPVGPELLGRVVDALGNPIDGKGPINAKLRRRSEEMAPGIIPRKSVHEAVQTGIKALDALVPVGRGQRELIIGDRQTGKTAIAIDAFINQKQVNSGSDNTKKLFCIYVAIGQKRSTVAQIVRQLEEMGAMEYSIVVAATASEPAPLQYLVPYSACSMGEYFRDNKQHALIVYDDLSKQAVAYRQMSLLLRRPPGREAYPGDVFYLHSRLLERAAKMSDKMGAGSLTALPIIETQAGDVSAYIPTNVISITDGQIFLETDLFYQGIRPAINVGLSVSRVGSAAQTKAMKKVAGSIKLELAQYREMAAFAQFGSDLDASTQKLLNRGKRLTELLKQPQFHPMPFEEQVVSLFAGTNGYIDGIEVSDVNRYEEAMLSYMRSSHNDLLATIRETGDFSDETKSKLTAALDNFAKIFA</sequence>
<comment type="function">
    <text evidence="1">Produces ATP from ADP in the presence of a proton gradient across the membrane. The alpha chain is a regulatory subunit.</text>
</comment>
<comment type="catalytic activity">
    <reaction evidence="1">
        <text>ATP + H2O + 4 H(+)(in) = ADP + phosphate + 5 H(+)(out)</text>
        <dbReference type="Rhea" id="RHEA:57720"/>
        <dbReference type="ChEBI" id="CHEBI:15377"/>
        <dbReference type="ChEBI" id="CHEBI:15378"/>
        <dbReference type="ChEBI" id="CHEBI:30616"/>
        <dbReference type="ChEBI" id="CHEBI:43474"/>
        <dbReference type="ChEBI" id="CHEBI:456216"/>
        <dbReference type="EC" id="7.1.2.2"/>
    </reaction>
</comment>
<comment type="subunit">
    <text evidence="1">F-type ATPases have 2 components, CF(1) - the catalytic core - and CF(0) - the membrane proton channel. CF(1) has five subunits: alpha(3), beta(3), gamma(1), delta(1), epsilon(1). CF(0) has three main subunits: a(1), b(2) and c(9-12). The alpha and beta chains form an alternating ring which encloses part of the gamma chain. CF(1) is attached to CF(0) by a central stalk formed by the gamma and epsilon chains, while a peripheral stalk is formed by the delta and b chains.</text>
</comment>
<comment type="subcellular location">
    <subcellularLocation>
        <location evidence="1">Cell inner membrane</location>
        <topology evidence="1">Peripheral membrane protein</topology>
    </subcellularLocation>
</comment>
<comment type="similarity">
    <text evidence="1">Belongs to the ATPase alpha/beta chains family.</text>
</comment>
<feature type="chain" id="PRO_0000238412" description="ATP synthase subunit alpha">
    <location>
        <begin position="1"/>
        <end position="509"/>
    </location>
</feature>
<feature type="binding site" evidence="1">
    <location>
        <begin position="169"/>
        <end position="176"/>
    </location>
    <ligand>
        <name>ATP</name>
        <dbReference type="ChEBI" id="CHEBI:30616"/>
    </ligand>
</feature>
<feature type="site" description="Required for activity" evidence="1">
    <location>
        <position position="370"/>
    </location>
</feature>
<proteinExistence type="inferred from homology"/>